<name>PP369_ARATH</name>
<accession>P0C8Q7</accession>
<accession>Q9FTA4</accession>
<proteinExistence type="evidence at transcript level"/>
<reference key="1">
    <citation type="journal article" date="2000" name="Nature">
        <title>Sequence and analysis of chromosome 5 of the plant Arabidopsis thaliana.</title>
        <authorList>
            <person name="Tabata S."/>
            <person name="Kaneko T."/>
            <person name="Nakamura Y."/>
            <person name="Kotani H."/>
            <person name="Kato T."/>
            <person name="Asamizu E."/>
            <person name="Miyajima N."/>
            <person name="Sasamoto S."/>
            <person name="Kimura T."/>
            <person name="Hosouchi T."/>
            <person name="Kawashima K."/>
            <person name="Kohara M."/>
            <person name="Matsumoto M."/>
            <person name="Matsuno A."/>
            <person name="Muraki A."/>
            <person name="Nakayama S."/>
            <person name="Nakazaki N."/>
            <person name="Naruo K."/>
            <person name="Okumura S."/>
            <person name="Shinpo S."/>
            <person name="Takeuchi C."/>
            <person name="Wada T."/>
            <person name="Watanabe A."/>
            <person name="Yamada M."/>
            <person name="Yasuda M."/>
            <person name="Sato S."/>
            <person name="de la Bastide M."/>
            <person name="Huang E."/>
            <person name="Spiegel L."/>
            <person name="Gnoj L."/>
            <person name="O'Shaughnessy A."/>
            <person name="Preston R."/>
            <person name="Habermann K."/>
            <person name="Murray J."/>
            <person name="Johnson D."/>
            <person name="Rohlfing T."/>
            <person name="Nelson J."/>
            <person name="Stoneking T."/>
            <person name="Pepin K."/>
            <person name="Spieth J."/>
            <person name="Sekhon M."/>
            <person name="Armstrong J."/>
            <person name="Becker M."/>
            <person name="Belter E."/>
            <person name="Cordum H."/>
            <person name="Cordes M."/>
            <person name="Courtney L."/>
            <person name="Courtney W."/>
            <person name="Dante M."/>
            <person name="Du H."/>
            <person name="Edwards J."/>
            <person name="Fryman J."/>
            <person name="Haakensen B."/>
            <person name="Lamar E."/>
            <person name="Latreille P."/>
            <person name="Leonard S."/>
            <person name="Meyer R."/>
            <person name="Mulvaney E."/>
            <person name="Ozersky P."/>
            <person name="Riley A."/>
            <person name="Strowmatt C."/>
            <person name="Wagner-McPherson C."/>
            <person name="Wollam A."/>
            <person name="Yoakum M."/>
            <person name="Bell M."/>
            <person name="Dedhia N."/>
            <person name="Parnell L."/>
            <person name="Shah R."/>
            <person name="Rodriguez M."/>
            <person name="Hoon See L."/>
            <person name="Vil D."/>
            <person name="Baker J."/>
            <person name="Kirchoff K."/>
            <person name="Toth K."/>
            <person name="King L."/>
            <person name="Bahret A."/>
            <person name="Miller B."/>
            <person name="Marra M.A."/>
            <person name="Martienssen R."/>
            <person name="McCombie W.R."/>
            <person name="Wilson R.K."/>
            <person name="Murphy G."/>
            <person name="Bancroft I."/>
            <person name="Volckaert G."/>
            <person name="Wambutt R."/>
            <person name="Duesterhoeft A."/>
            <person name="Stiekema W."/>
            <person name="Pohl T."/>
            <person name="Entian K.-D."/>
            <person name="Terryn N."/>
            <person name="Hartley N."/>
            <person name="Bent E."/>
            <person name="Johnson S."/>
            <person name="Langham S.-A."/>
            <person name="McCullagh B."/>
            <person name="Robben J."/>
            <person name="Grymonprez B."/>
            <person name="Zimmermann W."/>
            <person name="Ramsperger U."/>
            <person name="Wedler H."/>
            <person name="Balke K."/>
            <person name="Wedler E."/>
            <person name="Peters S."/>
            <person name="van Staveren M."/>
            <person name="Dirkse W."/>
            <person name="Mooijman P."/>
            <person name="Klein Lankhorst R."/>
            <person name="Weitzenegger T."/>
            <person name="Bothe G."/>
            <person name="Rose M."/>
            <person name="Hauf J."/>
            <person name="Berneiser S."/>
            <person name="Hempel S."/>
            <person name="Feldpausch M."/>
            <person name="Lamberth S."/>
            <person name="Villarroel R."/>
            <person name="Gielen J."/>
            <person name="Ardiles W."/>
            <person name="Bents O."/>
            <person name="Lemcke K."/>
            <person name="Kolesov G."/>
            <person name="Mayer K.F.X."/>
            <person name="Rudd S."/>
            <person name="Schoof H."/>
            <person name="Schueller C."/>
            <person name="Zaccaria P."/>
            <person name="Mewes H.-W."/>
            <person name="Bevan M."/>
            <person name="Fransz P.F."/>
        </authorList>
    </citation>
    <scope>NUCLEOTIDE SEQUENCE [LARGE SCALE GENOMIC DNA]</scope>
    <source>
        <strain>cv. Columbia</strain>
    </source>
</reference>
<reference key="2">
    <citation type="journal article" date="2017" name="Plant J.">
        <title>Araport11: a complete reannotation of the Arabidopsis thaliana reference genome.</title>
        <authorList>
            <person name="Cheng C.Y."/>
            <person name="Krishnakumar V."/>
            <person name="Chan A.P."/>
            <person name="Thibaud-Nissen F."/>
            <person name="Schobel S."/>
            <person name="Town C.D."/>
        </authorList>
    </citation>
    <scope>GENOME REANNOTATION</scope>
    <source>
        <strain>cv. Columbia</strain>
    </source>
</reference>
<reference key="3">
    <citation type="journal article" date="2004" name="Plant Cell">
        <title>Genome-wide analysis of Arabidopsis pentatricopeptide repeat proteins reveals their essential role in organelle biogenesis.</title>
        <authorList>
            <person name="Lurin C."/>
            <person name="Andres C."/>
            <person name="Aubourg S."/>
            <person name="Bellaoui M."/>
            <person name="Bitton F."/>
            <person name="Bruyere C."/>
            <person name="Caboche M."/>
            <person name="Debast C."/>
            <person name="Gualberto J."/>
            <person name="Hoffmann B."/>
            <person name="Lecharny A."/>
            <person name="Le Ret M."/>
            <person name="Martin-Magniette M.-L."/>
            <person name="Mireau H."/>
            <person name="Peeters N."/>
            <person name="Renou J.-P."/>
            <person name="Szurek B."/>
            <person name="Taconnat L."/>
            <person name="Small I."/>
        </authorList>
    </citation>
    <scope>GENE FAMILY</scope>
</reference>
<dbReference type="EMBL" id="AL392174">
    <property type="protein sequence ID" value="CAC08331.1"/>
    <property type="status" value="ALT_SEQ"/>
    <property type="molecule type" value="Genomic_DNA"/>
</dbReference>
<dbReference type="EMBL" id="CP002688">
    <property type="protein sequence ID" value="AED91280.1"/>
    <property type="molecule type" value="Genomic_DNA"/>
</dbReference>
<dbReference type="RefSeq" id="NP_001190262.1">
    <property type="nucleotide sequence ID" value="NM_001203333.2"/>
</dbReference>
<dbReference type="SMR" id="P0C8Q7"/>
<dbReference type="FunCoup" id="P0C8Q7">
    <property type="interactions" value="285"/>
</dbReference>
<dbReference type="STRING" id="3702.P0C8Q7"/>
<dbReference type="iPTMnet" id="P0C8Q7"/>
<dbReference type="PaxDb" id="3702-AT5G08305.1"/>
<dbReference type="ProteomicsDB" id="249259"/>
<dbReference type="EnsemblPlants" id="AT5G08305.1">
    <property type="protein sequence ID" value="AT5G08305.1"/>
    <property type="gene ID" value="AT5G08305"/>
</dbReference>
<dbReference type="GeneID" id="10723051"/>
<dbReference type="Gramene" id="AT5G08305.1">
    <property type="protein sequence ID" value="AT5G08305.1"/>
    <property type="gene ID" value="AT5G08305"/>
</dbReference>
<dbReference type="KEGG" id="ath:AT5G08305"/>
<dbReference type="Araport" id="AT5G08305"/>
<dbReference type="TAIR" id="AT5G08305">
    <property type="gene designation" value="MEF37"/>
</dbReference>
<dbReference type="eggNOG" id="KOG4197">
    <property type="taxonomic scope" value="Eukaryota"/>
</dbReference>
<dbReference type="HOGENOM" id="CLU_002706_37_2_1"/>
<dbReference type="InParanoid" id="P0C8Q7"/>
<dbReference type="OMA" id="IFNWNTI"/>
<dbReference type="OrthoDB" id="185373at2759"/>
<dbReference type="PRO" id="PR:P0C8Q7"/>
<dbReference type="Proteomes" id="UP000006548">
    <property type="component" value="Chromosome 5"/>
</dbReference>
<dbReference type="ExpressionAtlas" id="P0C8Q7">
    <property type="expression patterns" value="baseline and differential"/>
</dbReference>
<dbReference type="GO" id="GO:0003723">
    <property type="term" value="F:RNA binding"/>
    <property type="evidence" value="ECO:0007669"/>
    <property type="project" value="InterPro"/>
</dbReference>
<dbReference type="GO" id="GO:0009451">
    <property type="term" value="P:RNA modification"/>
    <property type="evidence" value="ECO:0007669"/>
    <property type="project" value="InterPro"/>
</dbReference>
<dbReference type="FunFam" id="1.25.40.10:FF:001360">
    <property type="entry name" value="Pentatricopeptide (PPR) repeat-containing protein-like"/>
    <property type="match status" value="1"/>
</dbReference>
<dbReference type="FunFam" id="1.25.40.10:FF:000348">
    <property type="entry name" value="Pentatricopeptide repeat-containing protein chloroplastic"/>
    <property type="match status" value="1"/>
</dbReference>
<dbReference type="Gene3D" id="1.25.40.10">
    <property type="entry name" value="Tetratricopeptide repeat domain"/>
    <property type="match status" value="3"/>
</dbReference>
<dbReference type="InterPro" id="IPR046848">
    <property type="entry name" value="E_motif"/>
</dbReference>
<dbReference type="InterPro" id="IPR002885">
    <property type="entry name" value="Pentatricopeptide_rpt"/>
</dbReference>
<dbReference type="InterPro" id="IPR046960">
    <property type="entry name" value="PPR_At4g14850-like_plant"/>
</dbReference>
<dbReference type="InterPro" id="IPR011990">
    <property type="entry name" value="TPR-like_helical_dom_sf"/>
</dbReference>
<dbReference type="NCBIfam" id="TIGR00756">
    <property type="entry name" value="PPR"/>
    <property type="match status" value="5"/>
</dbReference>
<dbReference type="PANTHER" id="PTHR47926">
    <property type="entry name" value="PENTATRICOPEPTIDE REPEAT-CONTAINING PROTEIN"/>
    <property type="match status" value="1"/>
</dbReference>
<dbReference type="PANTHER" id="PTHR47926:SF483">
    <property type="entry name" value="TETRATRICOPEPTIDE-LIKE HELICAL DOMAIN SUPERFAMILY"/>
    <property type="match status" value="1"/>
</dbReference>
<dbReference type="Pfam" id="PF20431">
    <property type="entry name" value="E_motif"/>
    <property type="match status" value="1"/>
</dbReference>
<dbReference type="Pfam" id="PF01535">
    <property type="entry name" value="PPR"/>
    <property type="match status" value="3"/>
</dbReference>
<dbReference type="Pfam" id="PF13041">
    <property type="entry name" value="PPR_2"/>
    <property type="match status" value="2"/>
</dbReference>
<dbReference type="Pfam" id="PF13812">
    <property type="entry name" value="PPR_3"/>
    <property type="match status" value="1"/>
</dbReference>
<dbReference type="SUPFAM" id="SSF48452">
    <property type="entry name" value="TPR-like"/>
    <property type="match status" value="1"/>
</dbReference>
<dbReference type="PROSITE" id="PS51375">
    <property type="entry name" value="PPR"/>
    <property type="match status" value="11"/>
</dbReference>
<sequence length="534" mass="59918">MLKSSSSLVAKSILRHQCKSMSELYKIHTLLITLGLSEEEPFVSQTLSFSALSSSGDVDYAYKFLSKLSDPPNYGWNFVIRGFSNSRNPEKSISVYIQMLRFGLLPDHMTYPFLMKSSSRLSNRKLGGSLHCSVVKSGLEWDLFICNTLIHMYGSFRDQASARKLFDEMPHKNLVTWNSILDAYAKSGDVVSARLVFDEMSERDVVTWSSMIDGYVKRGEYNKALEIFDQMMRMGSSKANEVTMVSVICACAHLGALNRGKTVHRYILDVHLPLTVILQTSLIDMYAKCGSIGDAWSVFYRASVKETDALMWNAIIGGLASHGFIRESLQLFHKMRESKIDPDEITFLCLLAACSHGGLVKEAWHFFKSLKESGAEPKSEHYACMVDVLSRAGLVKDAHDFISEMPIKPTGSMLGALLNGCINHGNLELAETVGKKLIELQPHNDGRYVGLANVYAINKQFRAARSMREAMEKKGVKKIAGHSILDLDGTRHRFIAHDKTHFHSDKIYAVLQLTGAWMNLDVDYDDQDNHCFCS</sequence>
<gene>
    <name type="primary">PCMP-E105</name>
    <name type="ordered locus">At5g08305</name>
    <name type="ORF">F8L15_40</name>
</gene>
<keyword id="KW-1185">Reference proteome</keyword>
<keyword id="KW-0677">Repeat</keyword>
<organism>
    <name type="scientific">Arabidopsis thaliana</name>
    <name type="common">Mouse-ear cress</name>
    <dbReference type="NCBI Taxonomy" id="3702"/>
    <lineage>
        <taxon>Eukaryota</taxon>
        <taxon>Viridiplantae</taxon>
        <taxon>Streptophyta</taxon>
        <taxon>Embryophyta</taxon>
        <taxon>Tracheophyta</taxon>
        <taxon>Spermatophyta</taxon>
        <taxon>Magnoliopsida</taxon>
        <taxon>eudicotyledons</taxon>
        <taxon>Gunneridae</taxon>
        <taxon>Pentapetalae</taxon>
        <taxon>rosids</taxon>
        <taxon>malvids</taxon>
        <taxon>Brassicales</taxon>
        <taxon>Brassicaceae</taxon>
        <taxon>Camelineae</taxon>
        <taxon>Arabidopsis</taxon>
    </lineage>
</organism>
<feature type="chain" id="PRO_0000363506" description="Pentatricopeptide repeat-containing protein At5g08305">
    <location>
        <begin position="1"/>
        <end position="534"/>
    </location>
</feature>
<feature type="repeat" description="PPR 1">
    <location>
        <begin position="41"/>
        <end position="71"/>
    </location>
</feature>
<feature type="repeat" description="PPR 2">
    <location>
        <begin position="72"/>
        <end position="106"/>
    </location>
</feature>
<feature type="repeat" description="PPR 3">
    <location>
        <begin position="107"/>
        <end position="141"/>
    </location>
</feature>
<feature type="repeat" description="PPR 4">
    <location>
        <begin position="142"/>
        <end position="172"/>
    </location>
</feature>
<feature type="repeat" description="PPR 5">
    <location>
        <begin position="173"/>
        <end position="203"/>
    </location>
</feature>
<feature type="repeat" description="PPR 6">
    <location>
        <begin position="204"/>
        <end position="238"/>
    </location>
</feature>
<feature type="repeat" description="PPR 7">
    <location>
        <begin position="240"/>
        <end position="274"/>
    </location>
</feature>
<feature type="repeat" description="PPR 8">
    <location>
        <begin position="275"/>
        <end position="305"/>
    </location>
</feature>
<feature type="repeat" description="PPR 9">
    <location>
        <begin position="308"/>
        <end position="342"/>
    </location>
</feature>
<feature type="repeat" description="PPR 10">
    <location>
        <begin position="343"/>
        <end position="377"/>
    </location>
</feature>
<feature type="repeat" description="PPR 11">
    <location>
        <begin position="378"/>
        <end position="408"/>
    </location>
</feature>
<feature type="region of interest" description="Type E motif">
    <location>
        <begin position="413"/>
        <end position="488"/>
    </location>
</feature>
<feature type="region of interest" description="Type E(+) motif">
    <location>
        <begin position="489"/>
        <end position="519"/>
    </location>
</feature>
<protein>
    <recommendedName>
        <fullName>Pentatricopeptide repeat-containing protein At5g08305</fullName>
    </recommendedName>
</protein>
<comment type="similarity">
    <text evidence="1">Belongs to the PPR family. PCMP-E subfamily.</text>
</comment>
<comment type="sequence caution" evidence="1">
    <conflict type="erroneous gene model prediction">
        <sequence resource="EMBL-CDS" id="CAC08331"/>
    </conflict>
    <text>The predicted gene has been split into 2 genes: At5g08305 and At5g08310.</text>
</comment>
<comment type="online information" name="Pentatricopeptide repeat proteins">
    <link uri="https://ppr.plantenergy.uwa.edu.au"/>
</comment>
<evidence type="ECO:0000305" key="1"/>